<sequence>MRAPAVLAPGILVLLFTLVQRSCGECKEALVKSEMNVNMKYQLPNFTAETPIQNVVLHKHHIYLGAVNYIYVLNDKDLQKVAEYKTGPVLEHPDCSPCQDCSHKANLSGAVWKDNINMALLIDIYYDDQLISCGSVQRGTCQRHVLPRSNTADIQSEVHCMYSPQADEEPGQCPDCVVSALGTKVLISEKTRFINFFVGNTINSSSHPDHSLHSISVRRLKETQDGFKFLTDQSYIDVLPEFRDSYPIKYVHAFESNHFIYFLTVQRETLDAQTFHTRVIRFCSVDSGLHSYMEMPLECILTEKRRKRSTREEVFNILQAAYVGKPGAHLAKQIGANLNDDILYGVFARSQPDSAEPMNRSAVCAFPIKYVNEFFNKIVNKNNVRCLQHFYGPNHEHCFNRTLLRNSSGCEVRSDEYRTEFTTALQRVDLFMGQFNQVLLTSISTFIKGDLTIANLGTSEGRFMQVVVSRSGSSTPHVNFRLDSHPVSPEAIVEHPLNQNGYTLVVTGKKITKIPLNGLGCEHFQSCSQCLSAPPFVQCGWCHDKCVQLEECPTGTWTQEICLPTIYEVFPTSAPLEGGTMLTICGWDFGFRRNNKFDLKKTKVLLGNESCTLTLSESTTNMLKCTVGPAVNEHFNISIIIANGRGTAQYSKFSYVDPIITSISPSYGPKTGGTLLTLNGKYLNSGNSRHISIGGETCTLKSVSDSILECYTPAQTTPTEFPIKLKIDLANREMNSFSYQEDPIVYAIHPTKSFISGGSTITAIGKNLHSVSVLRMGINVHEARRNFTVACQHRSNSEIICCTTPSLQQLSLQLPLKTKAFFMLDGIHSKYFDLIYVHNPVFKPFEKPVMISIGNENVLEIKGNDIDPEAVKGEVLKVGNKSCETIYSDSEAVLCKVPNDLLKLNNELNIEWKQAVSSTILGKVIVQPDQNFTGLIVGVISISLIVLLLLGLFLWLKRRKQIKDLGSELVRYDARVHTPHLDRLVSARSVSPTTEMVSNESVDYRATFPEDQFPNSSQNGSCRQVQYPLTDLSPMLTSGDSDISSPLLQNTVHIDLSALNPELVQAVQHVVIGPSSLIVHFNEVIGRGHFGCVYHGTLLDNDDKKIHCAVKSLNRITDIGEVSQFLTEGIIMKDFSHPNVLSLLGICLRSEGSPLVVLPYMKHGDLRNFIRNETHNPTVKDLIGFGLQVAKGMKYLASKKFVHRDLAARNCMLDEKFTVKVADFGLARDMYDKEYYSVHNKTGAKLPVKWMALESLQTQKFTTKSDVWSFGVLLWELMTRGAPPYPDVNTFDITVYLLQGRRLLQPEYCPDPLYEVMLKCWHPKAELRPSFSELVSRISAIFSTFIGEHYVHVNATYVNVKCVAPYPSLLSSQDIIDGEGDT</sequence>
<dbReference type="EC" id="2.7.10.1"/>
<dbReference type="EMBL" id="DP000183">
    <property type="protein sequence ID" value="ABI93652.1"/>
    <property type="molecule type" value="Genomic_DNA"/>
</dbReference>
<dbReference type="RefSeq" id="XP_004741975.1">
    <property type="nucleotide sequence ID" value="XM_004741918.3"/>
</dbReference>
<dbReference type="SMR" id="Q07E24"/>
<dbReference type="FunCoup" id="Q07E24">
    <property type="interactions" value="71"/>
</dbReference>
<dbReference type="STRING" id="9669.ENSMPUP00000007141"/>
<dbReference type="GlyCosmos" id="Q07E24">
    <property type="glycosylation" value="11 sites, No reported glycans"/>
</dbReference>
<dbReference type="GeneID" id="101675655"/>
<dbReference type="KEGG" id="mpuf:101675655"/>
<dbReference type="CTD" id="4233"/>
<dbReference type="eggNOG" id="KOG0836">
    <property type="taxonomic scope" value="Eukaryota"/>
</dbReference>
<dbReference type="eggNOG" id="KOG1095">
    <property type="taxonomic scope" value="Eukaryota"/>
</dbReference>
<dbReference type="eggNOG" id="KOG3610">
    <property type="taxonomic scope" value="Eukaryota"/>
</dbReference>
<dbReference type="InParanoid" id="Q07E24"/>
<dbReference type="OrthoDB" id="9985181at2759"/>
<dbReference type="Proteomes" id="UP000000715">
    <property type="component" value="Unplaced"/>
</dbReference>
<dbReference type="GO" id="GO:0005886">
    <property type="term" value="C:plasma membrane"/>
    <property type="evidence" value="ECO:0007669"/>
    <property type="project" value="TreeGrafter"/>
</dbReference>
<dbReference type="GO" id="GO:0002116">
    <property type="term" value="C:semaphorin receptor complex"/>
    <property type="evidence" value="ECO:0007669"/>
    <property type="project" value="TreeGrafter"/>
</dbReference>
<dbReference type="GO" id="GO:0005524">
    <property type="term" value="F:ATP binding"/>
    <property type="evidence" value="ECO:0007669"/>
    <property type="project" value="UniProtKB-KW"/>
</dbReference>
<dbReference type="GO" id="GO:0017154">
    <property type="term" value="F:semaphorin receptor activity"/>
    <property type="evidence" value="ECO:0007669"/>
    <property type="project" value="InterPro"/>
</dbReference>
<dbReference type="GO" id="GO:0004714">
    <property type="term" value="F:transmembrane receptor protein tyrosine kinase activity"/>
    <property type="evidence" value="ECO:0007669"/>
    <property type="project" value="UniProtKB-EC"/>
</dbReference>
<dbReference type="GO" id="GO:0007169">
    <property type="term" value="P:cell surface receptor protein tyrosine kinase signaling pathway"/>
    <property type="evidence" value="ECO:0007669"/>
    <property type="project" value="InterPro"/>
</dbReference>
<dbReference type="GO" id="GO:0050918">
    <property type="term" value="P:positive chemotaxis"/>
    <property type="evidence" value="ECO:0000250"/>
    <property type="project" value="UniProtKB"/>
</dbReference>
<dbReference type="GO" id="GO:2001028">
    <property type="term" value="P:positive regulation of endothelial cell chemotaxis"/>
    <property type="evidence" value="ECO:0000250"/>
    <property type="project" value="UniProtKB"/>
</dbReference>
<dbReference type="GO" id="GO:0071526">
    <property type="term" value="P:semaphorin-plexin signaling pathway"/>
    <property type="evidence" value="ECO:0000250"/>
    <property type="project" value="UniProtKB"/>
</dbReference>
<dbReference type="CDD" id="cd00603">
    <property type="entry name" value="IPT_PCSR"/>
    <property type="match status" value="1"/>
</dbReference>
<dbReference type="CDD" id="cd01180">
    <property type="entry name" value="IPT_plexin_repeat1"/>
    <property type="match status" value="1"/>
</dbReference>
<dbReference type="CDD" id="cd01179">
    <property type="entry name" value="IPT_plexin_repeat2"/>
    <property type="match status" value="1"/>
</dbReference>
<dbReference type="CDD" id="cd05058">
    <property type="entry name" value="PTKc_Met_Ron"/>
    <property type="match status" value="1"/>
</dbReference>
<dbReference type="FunFam" id="1.10.510.10:FF:000093">
    <property type="entry name" value="Hepatocyte growth factor receptor"/>
    <property type="match status" value="1"/>
</dbReference>
<dbReference type="FunFam" id="2.130.10.10:FF:000088">
    <property type="entry name" value="Hepatocyte growth factor receptor"/>
    <property type="match status" value="1"/>
</dbReference>
<dbReference type="FunFam" id="2.60.40.10:FF:000213">
    <property type="entry name" value="Hepatocyte growth factor receptor"/>
    <property type="match status" value="1"/>
</dbReference>
<dbReference type="FunFam" id="2.60.40.10:FF:000400">
    <property type="entry name" value="Hepatocyte growth factor receptor"/>
    <property type="match status" value="1"/>
</dbReference>
<dbReference type="FunFam" id="2.60.40.10:FF:002708">
    <property type="entry name" value="Hepatocyte growth factor receptor"/>
    <property type="match status" value="1"/>
</dbReference>
<dbReference type="FunFam" id="3.30.200.20:FF:000188">
    <property type="entry name" value="Hepatocyte growth factor receptor"/>
    <property type="match status" value="1"/>
</dbReference>
<dbReference type="FunFam" id="3.30.1680.10:FF:000006">
    <property type="entry name" value="Macrophage-stimulating 1 receptor b"/>
    <property type="match status" value="1"/>
</dbReference>
<dbReference type="Gene3D" id="2.60.40.10">
    <property type="entry name" value="Immunoglobulins"/>
    <property type="match status" value="3"/>
</dbReference>
<dbReference type="Gene3D" id="3.30.200.20">
    <property type="entry name" value="Phosphorylase Kinase, domain 1"/>
    <property type="match status" value="1"/>
</dbReference>
<dbReference type="Gene3D" id="1.10.510.10">
    <property type="entry name" value="Transferase(Phosphotransferase) domain 1"/>
    <property type="match status" value="1"/>
</dbReference>
<dbReference type="Gene3D" id="2.130.10.10">
    <property type="entry name" value="YVTN repeat-like/Quinoprotein amine dehydrogenase"/>
    <property type="match status" value="1"/>
</dbReference>
<dbReference type="InterPro" id="IPR013783">
    <property type="entry name" value="Ig-like_fold"/>
</dbReference>
<dbReference type="InterPro" id="IPR014756">
    <property type="entry name" value="Ig_E-set"/>
</dbReference>
<dbReference type="InterPro" id="IPR002909">
    <property type="entry name" value="IPT_dom"/>
</dbReference>
<dbReference type="InterPro" id="IPR011009">
    <property type="entry name" value="Kinase-like_dom_sf"/>
</dbReference>
<dbReference type="InterPro" id="IPR031148">
    <property type="entry name" value="Plexin"/>
</dbReference>
<dbReference type="InterPro" id="IPR002165">
    <property type="entry name" value="Plexin_repeat"/>
</dbReference>
<dbReference type="InterPro" id="IPR000719">
    <property type="entry name" value="Prot_kinase_dom"/>
</dbReference>
<dbReference type="InterPro" id="IPR017441">
    <property type="entry name" value="Protein_kinase_ATP_BS"/>
</dbReference>
<dbReference type="InterPro" id="IPR016201">
    <property type="entry name" value="PSI"/>
</dbReference>
<dbReference type="InterPro" id="IPR001627">
    <property type="entry name" value="Semap_dom"/>
</dbReference>
<dbReference type="InterPro" id="IPR036352">
    <property type="entry name" value="Semap_dom_sf"/>
</dbReference>
<dbReference type="InterPro" id="IPR001245">
    <property type="entry name" value="Ser-Thr/Tyr_kinase_cat_dom"/>
</dbReference>
<dbReference type="InterPro" id="IPR008266">
    <property type="entry name" value="Tyr_kinase_AS"/>
</dbReference>
<dbReference type="InterPro" id="IPR020635">
    <property type="entry name" value="Tyr_kinase_cat_dom"/>
</dbReference>
<dbReference type="InterPro" id="IPR016244">
    <property type="entry name" value="Tyr_kinase_HGF/MSP_rcpt"/>
</dbReference>
<dbReference type="InterPro" id="IPR015943">
    <property type="entry name" value="WD40/YVTN_repeat-like_dom_sf"/>
</dbReference>
<dbReference type="PANTHER" id="PTHR22625:SF61">
    <property type="entry name" value="HEPATOCYTE GROWTH FACTOR RECEPTOR"/>
    <property type="match status" value="1"/>
</dbReference>
<dbReference type="PANTHER" id="PTHR22625">
    <property type="entry name" value="PLEXIN"/>
    <property type="match status" value="1"/>
</dbReference>
<dbReference type="Pfam" id="PF07714">
    <property type="entry name" value="PK_Tyr_Ser-Thr"/>
    <property type="match status" value="1"/>
</dbReference>
<dbReference type="Pfam" id="PF01437">
    <property type="entry name" value="PSI"/>
    <property type="match status" value="1"/>
</dbReference>
<dbReference type="Pfam" id="PF01403">
    <property type="entry name" value="Sema"/>
    <property type="match status" value="1"/>
</dbReference>
<dbReference type="Pfam" id="PF01833">
    <property type="entry name" value="TIG"/>
    <property type="match status" value="3"/>
</dbReference>
<dbReference type="PIRSF" id="PIRSF000617">
    <property type="entry name" value="TyrPK_HGF-R"/>
    <property type="match status" value="1"/>
</dbReference>
<dbReference type="PRINTS" id="PR00109">
    <property type="entry name" value="TYRKINASE"/>
</dbReference>
<dbReference type="SMART" id="SM00429">
    <property type="entry name" value="IPT"/>
    <property type="match status" value="4"/>
</dbReference>
<dbReference type="SMART" id="SM00423">
    <property type="entry name" value="PSI"/>
    <property type="match status" value="1"/>
</dbReference>
<dbReference type="SMART" id="SM00630">
    <property type="entry name" value="Sema"/>
    <property type="match status" value="1"/>
</dbReference>
<dbReference type="SMART" id="SM00219">
    <property type="entry name" value="TyrKc"/>
    <property type="match status" value="1"/>
</dbReference>
<dbReference type="SUPFAM" id="SSF81296">
    <property type="entry name" value="E set domains"/>
    <property type="match status" value="3"/>
</dbReference>
<dbReference type="SUPFAM" id="SSF103575">
    <property type="entry name" value="Plexin repeat"/>
    <property type="match status" value="1"/>
</dbReference>
<dbReference type="SUPFAM" id="SSF56112">
    <property type="entry name" value="Protein kinase-like (PK-like)"/>
    <property type="match status" value="1"/>
</dbReference>
<dbReference type="SUPFAM" id="SSF101912">
    <property type="entry name" value="Sema domain"/>
    <property type="match status" value="1"/>
</dbReference>
<dbReference type="PROSITE" id="PS00107">
    <property type="entry name" value="PROTEIN_KINASE_ATP"/>
    <property type="match status" value="1"/>
</dbReference>
<dbReference type="PROSITE" id="PS50011">
    <property type="entry name" value="PROTEIN_KINASE_DOM"/>
    <property type="match status" value="1"/>
</dbReference>
<dbReference type="PROSITE" id="PS00109">
    <property type="entry name" value="PROTEIN_KINASE_TYR"/>
    <property type="match status" value="1"/>
</dbReference>
<dbReference type="PROSITE" id="PS51004">
    <property type="entry name" value="SEMA"/>
    <property type="match status" value="1"/>
</dbReference>
<keyword id="KW-0067">ATP-binding</keyword>
<keyword id="KW-1015">Disulfide bond</keyword>
<keyword id="KW-0325">Glycoprotein</keyword>
<keyword id="KW-0418">Kinase</keyword>
<keyword id="KW-0472">Membrane</keyword>
<keyword id="KW-0547">Nucleotide-binding</keyword>
<keyword id="KW-0597">Phosphoprotein</keyword>
<keyword id="KW-0656">Proto-oncogene</keyword>
<keyword id="KW-0675">Receptor</keyword>
<keyword id="KW-1185">Reference proteome</keyword>
<keyword id="KW-0677">Repeat</keyword>
<keyword id="KW-0732">Signal</keyword>
<keyword id="KW-0808">Transferase</keyword>
<keyword id="KW-0812">Transmembrane</keyword>
<keyword id="KW-1133">Transmembrane helix</keyword>
<keyword id="KW-0829">Tyrosine-protein kinase</keyword>
<keyword id="KW-0832">Ubl conjugation</keyword>
<gene>
    <name type="primary">MET</name>
</gene>
<protein>
    <recommendedName>
        <fullName>Hepatocyte growth factor receptor</fullName>
        <shortName>HGF receptor</shortName>
        <ecNumber>2.7.10.1</ecNumber>
    </recommendedName>
    <alternativeName>
        <fullName>HGF/SF receptor</fullName>
    </alternativeName>
    <alternativeName>
        <fullName>Proto-oncogene c-Met</fullName>
    </alternativeName>
    <alternativeName>
        <fullName>Scatter factor receptor</fullName>
        <shortName>SF receptor</shortName>
    </alternativeName>
    <alternativeName>
        <fullName>Tyrosine-protein kinase Met</fullName>
    </alternativeName>
</protein>
<name>MET_MUSPF</name>
<accession>Q07E24</accession>
<comment type="function">
    <text evidence="1">Receptor tyrosine kinase that transduces signals from the extracellular matrix into the cytoplasm by binding to hepatocyte growth factor/HGF ligand. Regulates many physiological processes including proliferation, scattering, morphogenesis and survival. Ligand binding at the cell surface induces autophosphorylation of MET on its intracellular domain that provides docking sites for downstream signaling molecules. Following activation by ligand, interacts with the PI3-kinase subunit PIK3R1, PLCG1, SRC, GRB2, STAT3 or the adapter GAB1. Recruitment of these downstream effectors by MET leads to the activation of several signaling cascades including the RAS-ERK, PI3 kinase-AKT, or PLCgamma-PKC. The RAS-ERK activation is associated with the morphogenetic effects while PI3K/AKT coordinates prosurvival effects. During embryonic development, MET signaling plays a role in gastrulation, development and migration of muscles and neuronal precursors, angiogenesis and kidney formation. In adults, participates in wound healing as well as organ regeneration and tissue remodeling. Also promotes differentiation and proliferation of hematopoietic cells (By similarity).</text>
</comment>
<comment type="catalytic activity">
    <reaction evidence="7">
        <text>L-tyrosyl-[protein] + ATP = O-phospho-L-tyrosyl-[protein] + ADP + H(+)</text>
        <dbReference type="Rhea" id="RHEA:10596"/>
        <dbReference type="Rhea" id="RHEA-COMP:10136"/>
        <dbReference type="Rhea" id="RHEA-COMP:20101"/>
        <dbReference type="ChEBI" id="CHEBI:15378"/>
        <dbReference type="ChEBI" id="CHEBI:30616"/>
        <dbReference type="ChEBI" id="CHEBI:46858"/>
        <dbReference type="ChEBI" id="CHEBI:61978"/>
        <dbReference type="ChEBI" id="CHEBI:456216"/>
        <dbReference type="EC" id="2.7.10.1"/>
    </reaction>
</comment>
<comment type="activity regulation">
    <text evidence="1">In its inactive state, the C-terminal tail interacts with the catalytic domain and inhibits the kinase activity. Upon ligand binding, the C-terminal tail is displaced and becomes phosphorylated, thus increasing the kinase activity (By similarity).</text>
</comment>
<comment type="subunit">
    <text evidence="2 3">Heterodimer made of an alpha chain (50 kDa) and a beta chain (145 kDa) which are disulfide linked. Binds PLXNB1. Interacts when phosphorylated with downstream effectors including STAT3, PIK3R1, SRC, PCLG1, GRB2 and GAB1. Interacts with SPSB1, SPSB2 and SPSB4. Interacts with INPP5D/SHIP1. When phosphorylated at Tyr-1357, interacts with INPPL1/SHIP2. Interacts with RANBP9 and RANBP10, as well as SPSB1, SPSB2, SPSB3 and SPSB4. SPSB1 binding occurs in the presence and in the absence of HGF, however HGF treatment has a positive effect on this interaction. Interacts with MUC20; prevents interaction with GRB2 and suppresses hepatocyte growth factor-induced cell proliferation. Interacts with GRB10. Interacts with PTPN1 and PTPN2. Interacts with HSP90AA1 and HSP90AB1; the interaction suppresses MET kinase activity. Interacts with tensin TNS3 (By similarity). Interacts (when phosphorylated) with tensin TNS4 (via SH2 domain); the interaction increases MET protein stability by inhibiting MET endocytosis and subsequent lysosomal degradation (By similarity).</text>
</comment>
<comment type="subcellular location">
    <subcellularLocation>
        <location evidence="1">Membrane</location>
        <topology evidence="1">Single-pass type I membrane protein</topology>
    </subcellularLocation>
</comment>
<comment type="domain">
    <text evidence="1">The kinase domain is involved in SPSB1 binding.</text>
</comment>
<comment type="domain">
    <text evidence="1">The beta-propeller Sema domain mediates binding to HGF.</text>
</comment>
<comment type="PTM">
    <text evidence="1">Autophosphorylated in response to ligand binding on Tyr-1235 and Tyr-1236 in the kinase domain leading to further phosphorylation of Tyr-1350 and Tyr-1357 in the C-terminal multifunctional docking site. Dephosphorylated by PTPRJ at Tyr-1350 and Tyr-1366. Dephosphorylated by PTPN1 and PTPN2 (By similarity).</text>
</comment>
<comment type="PTM">
    <text evidence="1">Ubiquitinated. Ubiquitination by CBL regulates the receptor stability and activity through proteasomal degradation (By similarity).</text>
</comment>
<comment type="PTM">
    <text evidence="2">O-mannosylation of IPT/TIG domains by TMEM260 is required for protein maturation. O-mannosylated residues are composed of single mannose glycans that are not elongated or modified.</text>
</comment>
<comment type="similarity">
    <text evidence="5">Belongs to the protein kinase superfamily. Tyr protein kinase family.</text>
</comment>
<feature type="signal peptide" evidence="4">
    <location>
        <begin position="1"/>
        <end position="24"/>
    </location>
</feature>
<feature type="chain" id="PRO_0000260426" description="Hepatocyte growth factor receptor">
    <location>
        <begin position="25"/>
        <end position="1382"/>
    </location>
</feature>
<feature type="topological domain" description="Extracellular" evidence="4">
    <location>
        <begin position="25"/>
        <end position="933"/>
    </location>
</feature>
<feature type="transmembrane region" description="Helical" evidence="4">
    <location>
        <begin position="934"/>
        <end position="956"/>
    </location>
</feature>
<feature type="topological domain" description="Cytoplasmic" evidence="4">
    <location>
        <begin position="957"/>
        <end position="1382"/>
    </location>
</feature>
<feature type="domain" description="Sema" evidence="6">
    <location>
        <begin position="27"/>
        <end position="516"/>
    </location>
</feature>
<feature type="domain" description="IPT/TIG 1">
    <location>
        <begin position="564"/>
        <end position="656"/>
    </location>
</feature>
<feature type="domain" description="IPT/TIG 2">
    <location>
        <begin position="658"/>
        <end position="740"/>
    </location>
</feature>
<feature type="domain" description="IPT/TIG 3">
    <location>
        <begin position="743"/>
        <end position="837"/>
    </location>
</feature>
<feature type="domain" description="Protein kinase" evidence="5">
    <location>
        <begin position="1079"/>
        <end position="1346"/>
    </location>
</feature>
<feature type="region of interest" description="Interaction with RANBP9" evidence="1">
    <location>
        <begin position="1213"/>
        <end position="1382"/>
    </location>
</feature>
<feature type="region of interest" description="Interaction with MUC20" evidence="1">
    <location>
        <begin position="1321"/>
        <end position="1360"/>
    </location>
</feature>
<feature type="active site" description="Proton acceptor" evidence="5 7">
    <location>
        <position position="1205"/>
    </location>
</feature>
<feature type="binding site" evidence="5">
    <location>
        <begin position="1085"/>
        <end position="1093"/>
    </location>
    <ligand>
        <name>ATP</name>
        <dbReference type="ChEBI" id="CHEBI:30616"/>
    </ligand>
</feature>
<feature type="binding site" evidence="5">
    <location>
        <position position="1111"/>
    </location>
    <ligand>
        <name>ATP</name>
        <dbReference type="ChEBI" id="CHEBI:30616"/>
    </ligand>
</feature>
<feature type="site" description="Cleavage" evidence="4">
    <location>
        <begin position="308"/>
        <end position="309"/>
    </location>
</feature>
<feature type="modified residue" description="Phosphoserine" evidence="2">
    <location>
        <position position="967"/>
    </location>
</feature>
<feature type="modified residue" description="Phosphothreonine" evidence="2">
    <location>
        <position position="978"/>
    </location>
</feature>
<feature type="modified residue" description="Phosphoserine" evidence="2">
    <location>
        <position position="991"/>
    </location>
</feature>
<feature type="modified residue" description="Phosphoserine" evidence="2">
    <location>
        <position position="998"/>
    </location>
</feature>
<feature type="modified residue" description="Phosphoserine" evidence="2">
    <location>
        <position position="1001"/>
    </location>
</feature>
<feature type="modified residue" description="Phosphotyrosine" evidence="2">
    <location>
        <position position="1004"/>
    </location>
</feature>
<feature type="modified residue" description="Phosphotyrosine" evidence="2">
    <location>
        <position position="1231"/>
    </location>
</feature>
<feature type="modified residue" description="Phosphotyrosine; by autocatalysis" evidence="2">
    <location>
        <position position="1235"/>
    </location>
</feature>
<feature type="modified residue" description="Phosphotyrosine; by autocatalysis" evidence="2">
    <location>
        <position position="1236"/>
    </location>
</feature>
<feature type="modified residue" description="Phosphothreonine" evidence="2">
    <location>
        <position position="1290"/>
    </location>
</feature>
<feature type="modified residue" description="Phosphotyrosine; by autocatalysis" evidence="2">
    <location>
        <position position="1350"/>
    </location>
</feature>
<feature type="modified residue" description="Phosphotyrosine; by autocatalysis" evidence="2">
    <location>
        <position position="1357"/>
    </location>
</feature>
<feature type="modified residue" description="Phosphotyrosine" evidence="2">
    <location>
        <position position="1366"/>
    </location>
</feature>
<feature type="glycosylation site" description="N-linked (GlcNAc...) asparagine" evidence="4">
    <location>
        <position position="45"/>
    </location>
</feature>
<feature type="glycosylation site" description="N-linked (GlcNAc...) asparagine" evidence="4">
    <location>
        <position position="106"/>
    </location>
</feature>
<feature type="glycosylation site" description="N-linked (GlcNAc...) asparagine" evidence="4">
    <location>
        <position position="203"/>
    </location>
</feature>
<feature type="glycosylation site" description="N-linked (GlcNAc...) asparagine" evidence="4">
    <location>
        <position position="359"/>
    </location>
</feature>
<feature type="glycosylation site" description="N-linked (GlcNAc...) asparagine" evidence="4">
    <location>
        <position position="400"/>
    </location>
</feature>
<feature type="glycosylation site" description="N-linked (GlcNAc...) asparagine" evidence="4">
    <location>
        <position position="406"/>
    </location>
</feature>
<feature type="glycosylation site" description="O-linked (Man) threonine" evidence="2">
    <location>
        <position position="583"/>
    </location>
</feature>
<feature type="glycosylation site" description="N-linked (GlcNAc...) asparagine" evidence="4">
    <location>
        <position position="608"/>
    </location>
</feature>
<feature type="glycosylation site" description="N-linked (GlcNAc...) asparagine" evidence="4">
    <location>
        <position position="636"/>
    </location>
</feature>
<feature type="glycosylation site" description="O-linked (Man) threonine" evidence="2">
    <location>
        <position position="677"/>
    </location>
</feature>
<feature type="glycosylation site" description="O-linked (Man) threonine" evidence="2">
    <location>
        <position position="762"/>
    </location>
</feature>
<feature type="glycosylation site" description="N-linked (GlcNAc...) asparagine" evidence="4">
    <location>
        <position position="786"/>
    </location>
</feature>
<feature type="glycosylation site" description="N-linked (GlcNAc...) asparagine" evidence="4">
    <location>
        <position position="880"/>
    </location>
</feature>
<feature type="glycosylation site" description="N-linked (GlcNAc...) asparagine" evidence="4">
    <location>
        <position position="931"/>
    </location>
</feature>
<feature type="disulfide bond" evidence="6">
    <location>
        <begin position="95"/>
        <end position="101"/>
    </location>
</feature>
<feature type="disulfide bond" evidence="6">
    <location>
        <begin position="98"/>
        <end position="160"/>
    </location>
</feature>
<feature type="disulfide bond" evidence="6">
    <location>
        <begin position="133"/>
        <end position="141"/>
    </location>
</feature>
<feature type="disulfide bond" evidence="6">
    <location>
        <begin position="173"/>
        <end position="176"/>
    </location>
</feature>
<feature type="disulfide bond" evidence="6">
    <location>
        <begin position="299"/>
        <end position="364"/>
    </location>
</feature>
<feature type="disulfide bond" evidence="6">
    <location>
        <begin position="386"/>
        <end position="398"/>
    </location>
</feature>
<feature type="disulfide bond" evidence="6">
    <location>
        <begin position="521"/>
        <end position="539"/>
    </location>
</feature>
<feature type="disulfide bond" evidence="6">
    <location>
        <begin position="527"/>
        <end position="562"/>
    </location>
</feature>
<feature type="disulfide bond" evidence="6">
    <location>
        <begin position="530"/>
        <end position="546"/>
    </location>
</feature>
<feature type="disulfide bond" evidence="6">
    <location>
        <begin position="542"/>
        <end position="552"/>
    </location>
</feature>
<proteinExistence type="inferred from homology"/>
<reference key="1">
    <citation type="submission" date="2006-09" db="EMBL/GenBank/DDBJ databases">
        <title>NISC comparative sequencing initiative.</title>
        <authorList>
            <person name="Antonellis A."/>
            <person name="Ayele K."/>
            <person name="Benjamin B."/>
            <person name="Blakesley R.W."/>
            <person name="Boakye A."/>
            <person name="Bouffard G.G."/>
            <person name="Brinkley C."/>
            <person name="Brooks S."/>
            <person name="Chu G."/>
            <person name="Coleman H."/>
            <person name="Engle J."/>
            <person name="Gestole M."/>
            <person name="Greene A."/>
            <person name="Guan X."/>
            <person name="Gupta J."/>
            <person name="Haghighi P."/>
            <person name="Han J."/>
            <person name="Hansen N."/>
            <person name="Ho S.-L."/>
            <person name="Hu P."/>
            <person name="Hunter G."/>
            <person name="Hurle B."/>
            <person name="Idol J.R."/>
            <person name="Kwong P."/>
            <person name="Laric P."/>
            <person name="Larson S."/>
            <person name="Lee-Lin S.-Q."/>
            <person name="Legaspi R."/>
            <person name="Madden M."/>
            <person name="Maduro Q.L."/>
            <person name="Maduro V.B."/>
            <person name="Margulies E.H."/>
            <person name="Masiello C."/>
            <person name="Maskeri B."/>
            <person name="McDowell J."/>
            <person name="Mojidi H.A."/>
            <person name="Mullikin J.C."/>
            <person name="Oestreicher J.S."/>
            <person name="Park M."/>
            <person name="Portnoy M.E."/>
            <person name="Prasad A."/>
            <person name="Puri O."/>
            <person name="Reddix-Dugue N."/>
            <person name="Schandler K."/>
            <person name="Schueler M.G."/>
            <person name="Sison C."/>
            <person name="Stantripop S."/>
            <person name="Stephen E."/>
            <person name="Taye A."/>
            <person name="Thomas J.W."/>
            <person name="Thomas P.J."/>
            <person name="Tsipouri V."/>
            <person name="Ung L."/>
            <person name="Vogt J.L."/>
            <person name="Wetherby K.D."/>
            <person name="Young A."/>
            <person name="Green E.D."/>
        </authorList>
    </citation>
    <scope>NUCLEOTIDE SEQUENCE [LARGE SCALE GENOMIC DNA]</scope>
</reference>
<organism>
    <name type="scientific">Mustela putorius furo</name>
    <name type="common">European domestic ferret</name>
    <name type="synonym">Mustela furo</name>
    <dbReference type="NCBI Taxonomy" id="9669"/>
    <lineage>
        <taxon>Eukaryota</taxon>
        <taxon>Metazoa</taxon>
        <taxon>Chordata</taxon>
        <taxon>Craniata</taxon>
        <taxon>Vertebrata</taxon>
        <taxon>Euteleostomi</taxon>
        <taxon>Mammalia</taxon>
        <taxon>Eutheria</taxon>
        <taxon>Laurasiatheria</taxon>
        <taxon>Carnivora</taxon>
        <taxon>Caniformia</taxon>
        <taxon>Musteloidea</taxon>
        <taxon>Mustelidae</taxon>
        <taxon>Mustelinae</taxon>
        <taxon>Mustela</taxon>
    </lineage>
</organism>
<evidence type="ECO:0000250" key="1"/>
<evidence type="ECO:0000250" key="2">
    <source>
        <dbReference type="UniProtKB" id="P08581"/>
    </source>
</evidence>
<evidence type="ECO:0000250" key="3">
    <source>
        <dbReference type="UniProtKB" id="P16056"/>
    </source>
</evidence>
<evidence type="ECO:0000255" key="4"/>
<evidence type="ECO:0000255" key="5">
    <source>
        <dbReference type="PROSITE-ProRule" id="PRU00159"/>
    </source>
</evidence>
<evidence type="ECO:0000255" key="6">
    <source>
        <dbReference type="PROSITE-ProRule" id="PRU00352"/>
    </source>
</evidence>
<evidence type="ECO:0000255" key="7">
    <source>
        <dbReference type="PROSITE-ProRule" id="PRU10028"/>
    </source>
</evidence>